<gene>
    <name evidence="1" type="primary">lipB</name>
    <name type="ordered locus">Spea_3155</name>
</gene>
<feature type="chain" id="PRO_1000074016" description="Octanoyltransferase">
    <location>
        <begin position="1"/>
        <end position="219"/>
    </location>
</feature>
<feature type="domain" description="BPL/LPL catalytic" evidence="2">
    <location>
        <begin position="32"/>
        <end position="207"/>
    </location>
</feature>
<feature type="active site" description="Acyl-thioester intermediate" evidence="1">
    <location>
        <position position="169"/>
    </location>
</feature>
<feature type="binding site" evidence="1">
    <location>
        <begin position="71"/>
        <end position="78"/>
    </location>
    <ligand>
        <name>substrate</name>
    </ligand>
</feature>
<feature type="binding site" evidence="1">
    <location>
        <begin position="138"/>
        <end position="140"/>
    </location>
    <ligand>
        <name>substrate</name>
    </ligand>
</feature>
<feature type="binding site" evidence="1">
    <location>
        <begin position="151"/>
        <end position="153"/>
    </location>
    <ligand>
        <name>substrate</name>
    </ligand>
</feature>
<feature type="site" description="Lowers pKa of active site Cys" evidence="1">
    <location>
        <position position="135"/>
    </location>
</feature>
<comment type="function">
    <text evidence="1">Catalyzes the transfer of endogenously produced octanoic acid from octanoyl-acyl-carrier-protein onto the lipoyl domains of lipoate-dependent enzymes. Lipoyl-ACP can also act as a substrate although octanoyl-ACP is likely to be the physiological substrate.</text>
</comment>
<comment type="catalytic activity">
    <reaction evidence="1">
        <text>octanoyl-[ACP] + L-lysyl-[protein] = N(6)-octanoyl-L-lysyl-[protein] + holo-[ACP] + H(+)</text>
        <dbReference type="Rhea" id="RHEA:17665"/>
        <dbReference type="Rhea" id="RHEA-COMP:9636"/>
        <dbReference type="Rhea" id="RHEA-COMP:9685"/>
        <dbReference type="Rhea" id="RHEA-COMP:9752"/>
        <dbReference type="Rhea" id="RHEA-COMP:9928"/>
        <dbReference type="ChEBI" id="CHEBI:15378"/>
        <dbReference type="ChEBI" id="CHEBI:29969"/>
        <dbReference type="ChEBI" id="CHEBI:64479"/>
        <dbReference type="ChEBI" id="CHEBI:78463"/>
        <dbReference type="ChEBI" id="CHEBI:78809"/>
        <dbReference type="EC" id="2.3.1.181"/>
    </reaction>
</comment>
<comment type="pathway">
    <text evidence="1">Protein modification; protein lipoylation via endogenous pathway; protein N(6)-(lipoyl)lysine from octanoyl-[acyl-carrier-protein]: step 1/2.</text>
</comment>
<comment type="subcellular location">
    <subcellularLocation>
        <location evidence="1">Cytoplasm</location>
    </subcellularLocation>
</comment>
<comment type="miscellaneous">
    <text evidence="1">In the reaction, the free carboxyl group of octanoic acid is attached via an amide linkage to the epsilon-amino group of a specific lysine residue of lipoyl domains of lipoate-dependent enzymes.</text>
</comment>
<comment type="similarity">
    <text evidence="1">Belongs to the LipB family.</text>
</comment>
<name>LIPB_SHEPA</name>
<sequence length="219" mass="24712">MYDNALHIRHLGKQDYESVWHAMQHYTDNRDENSQDEIWIVEHTPVFTQGQAGKSEHILNPGDIPVIQVDRGGQVTYHGPGQLVVYPLLDIKRLKVGVRQLVTHIEQSIINMLKRYQIEAYAKADAPGVYVEERKIASLGLRIRKGCSFHGLALNVDMDMSPFQRINPCGYAGMEMIQCKQLGGPQTVEEAGAQLIETLSQELGLDKLVHHQGLPESYE</sequence>
<accession>A8H7D4</accession>
<evidence type="ECO:0000255" key="1">
    <source>
        <dbReference type="HAMAP-Rule" id="MF_00013"/>
    </source>
</evidence>
<evidence type="ECO:0000255" key="2">
    <source>
        <dbReference type="PROSITE-ProRule" id="PRU01067"/>
    </source>
</evidence>
<dbReference type="EC" id="2.3.1.181" evidence="1"/>
<dbReference type="EMBL" id="CP000851">
    <property type="protein sequence ID" value="ABV88471.1"/>
    <property type="molecule type" value="Genomic_DNA"/>
</dbReference>
<dbReference type="RefSeq" id="WP_012156373.1">
    <property type="nucleotide sequence ID" value="NC_009901.1"/>
</dbReference>
<dbReference type="SMR" id="A8H7D4"/>
<dbReference type="STRING" id="398579.Spea_3155"/>
<dbReference type="KEGG" id="spl:Spea_3155"/>
<dbReference type="eggNOG" id="COG0321">
    <property type="taxonomic scope" value="Bacteria"/>
</dbReference>
<dbReference type="HOGENOM" id="CLU_035168_3_1_6"/>
<dbReference type="OrthoDB" id="9787061at2"/>
<dbReference type="UniPathway" id="UPA00538">
    <property type="reaction ID" value="UER00592"/>
</dbReference>
<dbReference type="Proteomes" id="UP000002608">
    <property type="component" value="Chromosome"/>
</dbReference>
<dbReference type="GO" id="GO:0005737">
    <property type="term" value="C:cytoplasm"/>
    <property type="evidence" value="ECO:0007669"/>
    <property type="project" value="UniProtKB-SubCell"/>
</dbReference>
<dbReference type="GO" id="GO:0033819">
    <property type="term" value="F:lipoyl(octanoyl) transferase activity"/>
    <property type="evidence" value="ECO:0007669"/>
    <property type="project" value="UniProtKB-EC"/>
</dbReference>
<dbReference type="GO" id="GO:0036211">
    <property type="term" value="P:protein modification process"/>
    <property type="evidence" value="ECO:0007669"/>
    <property type="project" value="InterPro"/>
</dbReference>
<dbReference type="CDD" id="cd16444">
    <property type="entry name" value="LipB"/>
    <property type="match status" value="1"/>
</dbReference>
<dbReference type="FunFam" id="3.30.930.10:FF:000020">
    <property type="entry name" value="Octanoyltransferase"/>
    <property type="match status" value="1"/>
</dbReference>
<dbReference type="Gene3D" id="3.30.930.10">
    <property type="entry name" value="Bira Bifunctional Protein, Domain 2"/>
    <property type="match status" value="1"/>
</dbReference>
<dbReference type="HAMAP" id="MF_00013">
    <property type="entry name" value="LipB"/>
    <property type="match status" value="1"/>
</dbReference>
<dbReference type="InterPro" id="IPR045864">
    <property type="entry name" value="aa-tRNA-synth_II/BPL/LPL"/>
</dbReference>
<dbReference type="InterPro" id="IPR004143">
    <property type="entry name" value="BPL_LPL_catalytic"/>
</dbReference>
<dbReference type="InterPro" id="IPR000544">
    <property type="entry name" value="Octanoyltransferase"/>
</dbReference>
<dbReference type="InterPro" id="IPR020605">
    <property type="entry name" value="Octanoyltransferase_CS"/>
</dbReference>
<dbReference type="NCBIfam" id="TIGR00214">
    <property type="entry name" value="lipB"/>
    <property type="match status" value="1"/>
</dbReference>
<dbReference type="NCBIfam" id="NF010922">
    <property type="entry name" value="PRK14342.1"/>
    <property type="match status" value="1"/>
</dbReference>
<dbReference type="PANTHER" id="PTHR10993:SF7">
    <property type="entry name" value="LIPOYLTRANSFERASE 2, MITOCHONDRIAL-RELATED"/>
    <property type="match status" value="1"/>
</dbReference>
<dbReference type="PANTHER" id="PTHR10993">
    <property type="entry name" value="OCTANOYLTRANSFERASE"/>
    <property type="match status" value="1"/>
</dbReference>
<dbReference type="Pfam" id="PF21948">
    <property type="entry name" value="LplA-B_cat"/>
    <property type="match status" value="1"/>
</dbReference>
<dbReference type="PIRSF" id="PIRSF016262">
    <property type="entry name" value="LPLase"/>
    <property type="match status" value="1"/>
</dbReference>
<dbReference type="SUPFAM" id="SSF55681">
    <property type="entry name" value="Class II aaRS and biotin synthetases"/>
    <property type="match status" value="1"/>
</dbReference>
<dbReference type="PROSITE" id="PS51733">
    <property type="entry name" value="BPL_LPL_CATALYTIC"/>
    <property type="match status" value="1"/>
</dbReference>
<dbReference type="PROSITE" id="PS01313">
    <property type="entry name" value="LIPB"/>
    <property type="match status" value="1"/>
</dbReference>
<keyword id="KW-0012">Acyltransferase</keyword>
<keyword id="KW-0963">Cytoplasm</keyword>
<keyword id="KW-1185">Reference proteome</keyword>
<keyword id="KW-0808">Transferase</keyword>
<reference key="1">
    <citation type="submission" date="2007-10" db="EMBL/GenBank/DDBJ databases">
        <title>Complete sequence of Shewanella pealeana ATCC 700345.</title>
        <authorList>
            <consortium name="US DOE Joint Genome Institute"/>
            <person name="Copeland A."/>
            <person name="Lucas S."/>
            <person name="Lapidus A."/>
            <person name="Barry K."/>
            <person name="Glavina del Rio T."/>
            <person name="Dalin E."/>
            <person name="Tice H."/>
            <person name="Pitluck S."/>
            <person name="Chertkov O."/>
            <person name="Brettin T."/>
            <person name="Bruce D."/>
            <person name="Detter J.C."/>
            <person name="Han C."/>
            <person name="Schmutz J."/>
            <person name="Larimer F."/>
            <person name="Land M."/>
            <person name="Hauser L."/>
            <person name="Kyrpides N."/>
            <person name="Kim E."/>
            <person name="Zhao J.-S.Z."/>
            <person name="Manno D."/>
            <person name="Hawari J."/>
            <person name="Richardson P."/>
        </authorList>
    </citation>
    <scope>NUCLEOTIDE SEQUENCE [LARGE SCALE GENOMIC DNA]</scope>
    <source>
        <strain>ATCC 700345 / ANG-SQ1</strain>
    </source>
</reference>
<protein>
    <recommendedName>
        <fullName evidence="1">Octanoyltransferase</fullName>
        <ecNumber evidence="1">2.3.1.181</ecNumber>
    </recommendedName>
    <alternativeName>
        <fullName evidence="1">Lipoate-protein ligase B</fullName>
    </alternativeName>
    <alternativeName>
        <fullName evidence="1">Lipoyl/octanoyl transferase</fullName>
    </alternativeName>
    <alternativeName>
        <fullName evidence="1">Octanoyl-[acyl-carrier-protein]-protein N-octanoyltransferase</fullName>
    </alternativeName>
</protein>
<proteinExistence type="inferred from homology"/>
<organism>
    <name type="scientific">Shewanella pealeana (strain ATCC 700345 / ANG-SQ1)</name>
    <dbReference type="NCBI Taxonomy" id="398579"/>
    <lineage>
        <taxon>Bacteria</taxon>
        <taxon>Pseudomonadati</taxon>
        <taxon>Pseudomonadota</taxon>
        <taxon>Gammaproteobacteria</taxon>
        <taxon>Alteromonadales</taxon>
        <taxon>Shewanellaceae</taxon>
        <taxon>Shewanella</taxon>
    </lineage>
</organism>